<gene>
    <name evidence="2" type="primary">purD</name>
    <name type="ordered locus">PH0323</name>
</gene>
<evidence type="ECO:0000250" key="1"/>
<evidence type="ECO:0000255" key="2">
    <source>
        <dbReference type="HAMAP-Rule" id="MF_00138"/>
    </source>
</evidence>
<dbReference type="EC" id="6.3.4.13" evidence="2"/>
<dbReference type="EMBL" id="BA000001">
    <property type="protein sequence ID" value="BAA29397.1"/>
    <property type="molecule type" value="Genomic_DNA"/>
</dbReference>
<dbReference type="PIR" id="H71138">
    <property type="entry name" value="H71138"/>
</dbReference>
<dbReference type="RefSeq" id="WP_010884418.1">
    <property type="nucleotide sequence ID" value="NC_000961.1"/>
</dbReference>
<dbReference type="SMR" id="O58061"/>
<dbReference type="STRING" id="70601.gene:9377242"/>
<dbReference type="EnsemblBacteria" id="BAA29397">
    <property type="protein sequence ID" value="BAA29397"/>
    <property type="gene ID" value="BAA29397"/>
</dbReference>
<dbReference type="GeneID" id="1444205"/>
<dbReference type="KEGG" id="pho:PH0323"/>
<dbReference type="eggNOG" id="arCOG04415">
    <property type="taxonomic scope" value="Archaea"/>
</dbReference>
<dbReference type="OrthoDB" id="146558at2157"/>
<dbReference type="UniPathway" id="UPA00074">
    <property type="reaction ID" value="UER00125"/>
</dbReference>
<dbReference type="Proteomes" id="UP000000752">
    <property type="component" value="Chromosome"/>
</dbReference>
<dbReference type="GO" id="GO:0005524">
    <property type="term" value="F:ATP binding"/>
    <property type="evidence" value="ECO:0007669"/>
    <property type="project" value="UniProtKB-KW"/>
</dbReference>
<dbReference type="GO" id="GO:0046872">
    <property type="term" value="F:metal ion binding"/>
    <property type="evidence" value="ECO:0007669"/>
    <property type="project" value="UniProtKB-KW"/>
</dbReference>
<dbReference type="GO" id="GO:0004637">
    <property type="term" value="F:phosphoribosylamine-glycine ligase activity"/>
    <property type="evidence" value="ECO:0007669"/>
    <property type="project" value="UniProtKB-UniRule"/>
</dbReference>
<dbReference type="GO" id="GO:0006189">
    <property type="term" value="P:'de novo' IMP biosynthetic process"/>
    <property type="evidence" value="ECO:0007669"/>
    <property type="project" value="UniProtKB-UniRule"/>
</dbReference>
<dbReference type="GO" id="GO:0009113">
    <property type="term" value="P:purine nucleobase biosynthetic process"/>
    <property type="evidence" value="ECO:0007669"/>
    <property type="project" value="InterPro"/>
</dbReference>
<dbReference type="Gene3D" id="3.40.50.20">
    <property type="match status" value="1"/>
</dbReference>
<dbReference type="Gene3D" id="3.30.1490.20">
    <property type="entry name" value="ATP-grasp fold, A domain"/>
    <property type="match status" value="1"/>
</dbReference>
<dbReference type="Gene3D" id="3.30.470.20">
    <property type="entry name" value="ATP-grasp fold, B domain"/>
    <property type="match status" value="1"/>
</dbReference>
<dbReference type="Gene3D" id="3.90.600.10">
    <property type="entry name" value="Phosphoribosylglycinamide synthetase, C-terminal domain"/>
    <property type="match status" value="1"/>
</dbReference>
<dbReference type="HAMAP" id="MF_00138">
    <property type="entry name" value="GARS"/>
    <property type="match status" value="1"/>
</dbReference>
<dbReference type="InterPro" id="IPR011761">
    <property type="entry name" value="ATP-grasp"/>
</dbReference>
<dbReference type="InterPro" id="IPR013815">
    <property type="entry name" value="ATP_grasp_subdomain_1"/>
</dbReference>
<dbReference type="InterPro" id="IPR016185">
    <property type="entry name" value="PreATP-grasp_dom_sf"/>
</dbReference>
<dbReference type="InterPro" id="IPR020561">
    <property type="entry name" value="PRibGlycinamid_synth_ATP-grasp"/>
</dbReference>
<dbReference type="InterPro" id="IPR000115">
    <property type="entry name" value="PRibGlycinamide_synth"/>
</dbReference>
<dbReference type="InterPro" id="IPR020560">
    <property type="entry name" value="PRibGlycinamide_synth_C-dom"/>
</dbReference>
<dbReference type="InterPro" id="IPR037123">
    <property type="entry name" value="PRibGlycinamide_synth_C_sf"/>
</dbReference>
<dbReference type="InterPro" id="IPR020559">
    <property type="entry name" value="PRibGlycinamide_synth_CS"/>
</dbReference>
<dbReference type="InterPro" id="IPR020562">
    <property type="entry name" value="PRibGlycinamide_synth_N"/>
</dbReference>
<dbReference type="InterPro" id="IPR011054">
    <property type="entry name" value="Rudment_hybrid_motif"/>
</dbReference>
<dbReference type="NCBIfam" id="TIGR00877">
    <property type="entry name" value="purD"/>
    <property type="match status" value="1"/>
</dbReference>
<dbReference type="PANTHER" id="PTHR43472">
    <property type="entry name" value="PHOSPHORIBOSYLAMINE--GLYCINE LIGASE"/>
    <property type="match status" value="1"/>
</dbReference>
<dbReference type="PANTHER" id="PTHR43472:SF1">
    <property type="entry name" value="PHOSPHORIBOSYLAMINE--GLYCINE LIGASE, CHLOROPLASTIC"/>
    <property type="match status" value="1"/>
</dbReference>
<dbReference type="Pfam" id="PF01071">
    <property type="entry name" value="GARS_A"/>
    <property type="match status" value="1"/>
</dbReference>
<dbReference type="Pfam" id="PF02843">
    <property type="entry name" value="GARS_C"/>
    <property type="match status" value="1"/>
</dbReference>
<dbReference type="Pfam" id="PF02844">
    <property type="entry name" value="GARS_N"/>
    <property type="match status" value="1"/>
</dbReference>
<dbReference type="SMART" id="SM01209">
    <property type="entry name" value="GARS_A"/>
    <property type="match status" value="1"/>
</dbReference>
<dbReference type="SMART" id="SM01210">
    <property type="entry name" value="GARS_C"/>
    <property type="match status" value="1"/>
</dbReference>
<dbReference type="SUPFAM" id="SSF56059">
    <property type="entry name" value="Glutathione synthetase ATP-binding domain-like"/>
    <property type="match status" value="1"/>
</dbReference>
<dbReference type="SUPFAM" id="SSF52440">
    <property type="entry name" value="PreATP-grasp domain"/>
    <property type="match status" value="1"/>
</dbReference>
<dbReference type="SUPFAM" id="SSF51246">
    <property type="entry name" value="Rudiment single hybrid motif"/>
    <property type="match status" value="1"/>
</dbReference>
<dbReference type="PROSITE" id="PS50975">
    <property type="entry name" value="ATP_GRASP"/>
    <property type="match status" value="1"/>
</dbReference>
<dbReference type="PROSITE" id="PS00184">
    <property type="entry name" value="GARS"/>
    <property type="match status" value="1"/>
</dbReference>
<accession>O58061</accession>
<name>PUR2_PYRHO</name>
<proteinExistence type="inferred from homology"/>
<feature type="chain" id="PRO_0000151516" description="Phosphoribosylamine--glycine ligase">
    <location>
        <begin position="1"/>
        <end position="438"/>
    </location>
</feature>
<feature type="domain" description="ATP-grasp" evidence="2">
    <location>
        <begin position="108"/>
        <end position="316"/>
    </location>
</feature>
<feature type="binding site" evidence="2">
    <location>
        <begin position="135"/>
        <end position="194"/>
    </location>
    <ligand>
        <name>ATP</name>
        <dbReference type="ChEBI" id="CHEBI:30616"/>
    </ligand>
</feature>
<feature type="binding site" evidence="2">
    <location>
        <position position="274"/>
    </location>
    <ligand>
        <name>Mg(2+)</name>
        <dbReference type="ChEBI" id="CHEBI:18420"/>
        <label>1</label>
    </ligand>
</feature>
<feature type="binding site" evidence="2">
    <location>
        <position position="274"/>
    </location>
    <ligand>
        <name>Mn(2+)</name>
        <dbReference type="ChEBI" id="CHEBI:29035"/>
        <label>1</label>
    </ligand>
</feature>
<feature type="binding site" evidence="2">
    <location>
        <position position="286"/>
    </location>
    <ligand>
        <name>Mg(2+)</name>
        <dbReference type="ChEBI" id="CHEBI:18420"/>
        <label>1</label>
    </ligand>
</feature>
<feature type="binding site" evidence="2">
    <location>
        <position position="286"/>
    </location>
    <ligand>
        <name>Mg(2+)</name>
        <dbReference type="ChEBI" id="CHEBI:18420"/>
        <label>2</label>
    </ligand>
</feature>
<feature type="binding site" evidence="2">
    <location>
        <position position="286"/>
    </location>
    <ligand>
        <name>Mn(2+)</name>
        <dbReference type="ChEBI" id="CHEBI:29035"/>
        <label>1</label>
    </ligand>
</feature>
<feature type="binding site" evidence="2">
    <location>
        <position position="286"/>
    </location>
    <ligand>
        <name>Mn(2+)</name>
        <dbReference type="ChEBI" id="CHEBI:29035"/>
        <label>2</label>
    </ligand>
</feature>
<feature type="binding site" evidence="2">
    <location>
        <position position="288"/>
    </location>
    <ligand>
        <name>Mg(2+)</name>
        <dbReference type="ChEBI" id="CHEBI:18420"/>
        <label>2</label>
    </ligand>
</feature>
<feature type="binding site" evidence="2">
    <location>
        <position position="288"/>
    </location>
    <ligand>
        <name>Mn(2+)</name>
        <dbReference type="ChEBI" id="CHEBI:29035"/>
        <label>2</label>
    </ligand>
</feature>
<sequence length="438" mass="48458">MKVLLVGGGGREHAIGEALVKGGAELYVVSNHRNPGLMRLAKDYGLAKETNVEDVIKFARKWGIELAFIGPEAPLEAGIVNALEEEGIPAVGPTREAARLETNKAWAREFMERNNIPGRKMFRIFDDVQEMRKWIDEYGKPVVVKPLGLTGGKGVKVVGYQLKDNEEAKEYAEHIIRKDGKVLIEERTDGVEFTLQVFTDGKKVIPMPLVQDYPHAYEGDVGPITGGMGSYSCSNHLLPFITEGDFERALKTLEETIEAMRKEGYPYKGILYGQFMLSGEGPVLIEYNARFGDPEAINVLAVLDDNLLEIAKGIVEGSLRKAKFLNKATVVKYIAPQGYPQDPIKGIRIEVDEEGIKNEGAKIIYAAVDENLTLLGSRALAIVGVADSLEEAERIAENGVSYVKGPIFYRKDVGTRESVEKRIEIMKKLGKEFEPNLC</sequence>
<reference key="1">
    <citation type="journal article" date="1998" name="DNA Res.">
        <title>Complete sequence and gene organization of the genome of a hyper-thermophilic archaebacterium, Pyrococcus horikoshii OT3.</title>
        <authorList>
            <person name="Kawarabayasi Y."/>
            <person name="Sawada M."/>
            <person name="Horikawa H."/>
            <person name="Haikawa Y."/>
            <person name="Hino Y."/>
            <person name="Yamamoto S."/>
            <person name="Sekine M."/>
            <person name="Baba S."/>
            <person name="Kosugi H."/>
            <person name="Hosoyama A."/>
            <person name="Nagai Y."/>
            <person name="Sakai M."/>
            <person name="Ogura K."/>
            <person name="Otsuka R."/>
            <person name="Nakazawa H."/>
            <person name="Takamiya M."/>
            <person name="Ohfuku Y."/>
            <person name="Funahashi T."/>
            <person name="Tanaka T."/>
            <person name="Kudoh Y."/>
            <person name="Yamazaki J."/>
            <person name="Kushida N."/>
            <person name="Oguchi A."/>
            <person name="Aoki K."/>
            <person name="Yoshizawa T."/>
            <person name="Nakamura Y."/>
            <person name="Robb F.T."/>
            <person name="Horikoshi K."/>
            <person name="Masuchi Y."/>
            <person name="Shizuya H."/>
            <person name="Kikuchi H."/>
        </authorList>
    </citation>
    <scope>NUCLEOTIDE SEQUENCE [LARGE SCALE GENOMIC DNA]</scope>
    <source>
        <strain>ATCC 700860 / DSM 12428 / JCM 9974 / NBRC 100139 / OT-3</strain>
    </source>
</reference>
<comment type="catalytic activity">
    <reaction evidence="2">
        <text>5-phospho-beta-D-ribosylamine + glycine + ATP = N(1)-(5-phospho-beta-D-ribosyl)glycinamide + ADP + phosphate + H(+)</text>
        <dbReference type="Rhea" id="RHEA:17453"/>
        <dbReference type="ChEBI" id="CHEBI:15378"/>
        <dbReference type="ChEBI" id="CHEBI:30616"/>
        <dbReference type="ChEBI" id="CHEBI:43474"/>
        <dbReference type="ChEBI" id="CHEBI:57305"/>
        <dbReference type="ChEBI" id="CHEBI:58681"/>
        <dbReference type="ChEBI" id="CHEBI:143788"/>
        <dbReference type="ChEBI" id="CHEBI:456216"/>
        <dbReference type="EC" id="6.3.4.13"/>
    </reaction>
</comment>
<comment type="cofactor">
    <cofactor evidence="1">
        <name>Mg(2+)</name>
        <dbReference type="ChEBI" id="CHEBI:18420"/>
    </cofactor>
    <cofactor evidence="1">
        <name>Mn(2+)</name>
        <dbReference type="ChEBI" id="CHEBI:29035"/>
    </cofactor>
    <text evidence="1">Binds 2 magnesium or manganese ions per subunit.</text>
</comment>
<comment type="pathway">
    <text evidence="2">Purine metabolism; IMP biosynthesis via de novo pathway; N(1)-(5-phospho-D-ribosyl)glycinamide from 5-phospho-alpha-D-ribose 1-diphosphate: step 2/2.</text>
</comment>
<comment type="similarity">
    <text evidence="2">Belongs to the GARS family.</text>
</comment>
<organism>
    <name type="scientific">Pyrococcus horikoshii (strain ATCC 700860 / DSM 12428 / JCM 9974 / NBRC 100139 / OT-3)</name>
    <dbReference type="NCBI Taxonomy" id="70601"/>
    <lineage>
        <taxon>Archaea</taxon>
        <taxon>Methanobacteriati</taxon>
        <taxon>Methanobacteriota</taxon>
        <taxon>Thermococci</taxon>
        <taxon>Thermococcales</taxon>
        <taxon>Thermococcaceae</taxon>
        <taxon>Pyrococcus</taxon>
    </lineage>
</organism>
<keyword id="KW-0067">ATP-binding</keyword>
<keyword id="KW-0436">Ligase</keyword>
<keyword id="KW-0460">Magnesium</keyword>
<keyword id="KW-0464">Manganese</keyword>
<keyword id="KW-0479">Metal-binding</keyword>
<keyword id="KW-0547">Nucleotide-binding</keyword>
<keyword id="KW-0658">Purine biosynthesis</keyword>
<protein>
    <recommendedName>
        <fullName evidence="2">Phosphoribosylamine--glycine ligase</fullName>
        <ecNumber evidence="2">6.3.4.13</ecNumber>
    </recommendedName>
    <alternativeName>
        <fullName evidence="2">GARS</fullName>
    </alternativeName>
    <alternativeName>
        <fullName evidence="2">Glycinamide ribonucleotide synthetase</fullName>
    </alternativeName>
    <alternativeName>
        <fullName evidence="2">Phosphoribosylglycinamide synthetase</fullName>
    </alternativeName>
</protein>